<organism>
    <name type="scientific">Saccharomyces cerevisiae (strain ATCC 204508 / S288c)</name>
    <name type="common">Baker's yeast</name>
    <dbReference type="NCBI Taxonomy" id="559292"/>
    <lineage>
        <taxon>Eukaryota</taxon>
        <taxon>Fungi</taxon>
        <taxon>Dikarya</taxon>
        <taxon>Ascomycota</taxon>
        <taxon>Saccharomycotina</taxon>
        <taxon>Saccharomycetes</taxon>
        <taxon>Saccharomycetales</taxon>
        <taxon>Saccharomycetaceae</taxon>
        <taxon>Saccharomyces</taxon>
    </lineage>
</organism>
<name>PEX15_YEAST</name>
<proteinExistence type="evidence at protein level"/>
<gene>
    <name type="primary">PEX15</name>
    <name type="synonym">PAS21</name>
    <name type="ordered locus">YOL044W</name>
</gene>
<keyword id="KW-0002">3D-structure</keyword>
<keyword id="KW-0256">Endoplasmic reticulum</keyword>
<keyword id="KW-0472">Membrane</keyword>
<keyword id="KW-0576">Peroxisome</keyword>
<keyword id="KW-0962">Peroxisome biogenesis</keyword>
<keyword id="KW-0597">Phosphoprotein</keyword>
<keyword id="KW-1185">Reference proteome</keyword>
<keyword id="KW-0812">Transmembrane</keyword>
<keyword id="KW-1133">Transmembrane helix</keyword>
<protein>
    <recommendedName>
        <fullName>Peroxisomal membrane protein PEX15</fullName>
    </recommendedName>
    <alternativeName>
        <fullName>Peroxin-15</fullName>
    </alternativeName>
    <alternativeName>
        <fullName>Peroxisome biosynthesis protein PAS21</fullName>
    </alternativeName>
</protein>
<evidence type="ECO:0000255" key="1"/>
<evidence type="ECO:0000269" key="2">
    <source>
    </source>
</evidence>
<evidence type="ECO:0000269" key="3">
    <source>
    </source>
</evidence>
<evidence type="ECO:0000269" key="4">
    <source>
    </source>
</evidence>
<evidence type="ECO:0000269" key="5">
    <source>
    </source>
</evidence>
<evidence type="ECO:0000269" key="6">
    <source>
    </source>
</evidence>
<evidence type="ECO:0000269" key="7">
    <source>
    </source>
</evidence>
<evidence type="ECO:0000269" key="8">
    <source>
    </source>
</evidence>
<evidence type="ECO:0007829" key="9">
    <source>
        <dbReference type="PDB" id="5VXV"/>
    </source>
</evidence>
<feature type="chain" id="PRO_0000270567" description="Peroxisomal membrane protein PEX15">
    <location>
        <begin position="1"/>
        <end position="383"/>
    </location>
</feature>
<feature type="topological domain" description="Cytoplasmic" evidence="1">
    <location>
        <begin position="1"/>
        <end position="331"/>
    </location>
</feature>
<feature type="transmembrane region" description="Helical" evidence="1">
    <location>
        <begin position="332"/>
        <end position="349"/>
    </location>
</feature>
<feature type="topological domain" description="Lumenal" evidence="1">
    <location>
        <begin position="350"/>
        <end position="383"/>
    </location>
</feature>
<feature type="mutagenesis site" description="No interaction with PEX6." evidence="2">
    <original>L</original>
    <variation>F</variation>
    <variation>S</variation>
    <location>
        <position position="22"/>
    </location>
</feature>
<feature type="mutagenesis site" description="No interaction with PEX6." evidence="2">
    <original>Q</original>
    <variation>L</variation>
    <location>
        <position position="47"/>
    </location>
</feature>
<feature type="mutagenesis site" description="No interaction with PEX6." evidence="2">
    <original>V</original>
    <variation>A</variation>
    <location>
        <position position="50"/>
    </location>
</feature>
<feature type="helix" evidence="9">
    <location>
        <begin position="44"/>
        <end position="54"/>
    </location>
</feature>
<feature type="helix" evidence="9">
    <location>
        <begin position="58"/>
        <end position="68"/>
    </location>
</feature>
<feature type="helix" evidence="9">
    <location>
        <begin position="73"/>
        <end position="78"/>
    </location>
</feature>
<feature type="helix" evidence="9">
    <location>
        <begin position="80"/>
        <end position="92"/>
    </location>
</feature>
<feature type="helix" evidence="9">
    <location>
        <begin position="101"/>
        <end position="111"/>
    </location>
</feature>
<feature type="helix" evidence="9">
    <location>
        <begin position="116"/>
        <end position="127"/>
    </location>
</feature>
<feature type="helix" evidence="9">
    <location>
        <begin position="132"/>
        <end position="148"/>
    </location>
</feature>
<feature type="helix" evidence="9">
    <location>
        <begin position="153"/>
        <end position="177"/>
    </location>
</feature>
<feature type="turn" evidence="9">
    <location>
        <begin position="178"/>
        <end position="180"/>
    </location>
</feature>
<feature type="helix" evidence="9">
    <location>
        <begin position="184"/>
        <end position="197"/>
    </location>
</feature>
<feature type="helix" evidence="9">
    <location>
        <begin position="198"/>
        <end position="202"/>
    </location>
</feature>
<feature type="helix" evidence="9">
    <location>
        <begin position="209"/>
        <end position="218"/>
    </location>
</feature>
<feature type="helix" evidence="9">
    <location>
        <begin position="222"/>
        <end position="228"/>
    </location>
</feature>
<feature type="strand" evidence="9">
    <location>
        <begin position="230"/>
        <end position="232"/>
    </location>
</feature>
<feature type="helix" evidence="9">
    <location>
        <begin position="237"/>
        <end position="253"/>
    </location>
</feature>
<comment type="function">
    <text evidence="2 5 8">Peroxisomal docking factor that anchors PEX1 and PEX6 to peroxisome membranes (PubMed:12808025, PubMed:16007078, PubMed:9405362). PEX26 is therefore required for the formation of the PEX1-PEX6 AAA ATPase complex, a complex that mediates the extraction of the PEX5 receptor from peroxisomal membrane (PubMed:12808025, PubMed:9405362).</text>
</comment>
<comment type="subunit">
    <text evidence="2 6">Interacts with PEX6 (PubMed:12808025). Interacts with PEX19; targets PEX15 to the peroxisome (PubMed:16763195).</text>
</comment>
<comment type="interaction">
    <interactant intactId="EBI-31849">
        <id>Q08215</id>
    </interactant>
    <interactant intactId="EBI-13178">
        <id>P33760</id>
        <label>PEX6</label>
    </interactant>
    <organismsDiffer>false</organismsDiffer>
    <experiments>14</experiments>
</comment>
<comment type="subcellular location">
    <subcellularLocation>
        <location evidence="3 7">Peroxisome membrane</location>
        <topology evidence="3">Single-pass membrane protein</topology>
    </subcellularLocation>
    <subcellularLocation>
        <location evidence="3">Endoplasmic reticulum membrane</location>
        <topology evidence="3">Single-pass membrane protein</topology>
    </subcellularLocation>
</comment>
<comment type="PTM">
    <text evidence="8">Phosphorylated.</text>
</comment>
<comment type="miscellaneous">
    <text evidence="4">Present with 1070 molecules/cell in log phase SD medium.</text>
</comment>
<accession>Q08215</accession>
<accession>D6W222</accession>
<dbReference type="EMBL" id="Z74786">
    <property type="protein sequence ID" value="CAA99046.1"/>
    <property type="molecule type" value="Genomic_DNA"/>
</dbReference>
<dbReference type="EMBL" id="BK006948">
    <property type="protein sequence ID" value="DAA10738.1"/>
    <property type="molecule type" value="Genomic_DNA"/>
</dbReference>
<dbReference type="PIR" id="S66729">
    <property type="entry name" value="S66729"/>
</dbReference>
<dbReference type="RefSeq" id="NP_014598.1">
    <property type="nucleotide sequence ID" value="NM_001183298.1"/>
</dbReference>
<dbReference type="PDB" id="5VXV">
    <property type="method" value="X-ray"/>
    <property type="resolution" value="1.55 A"/>
    <property type="chains" value="A=43-253"/>
</dbReference>
<dbReference type="PDBsum" id="5VXV"/>
<dbReference type="SMR" id="Q08215"/>
<dbReference type="BioGRID" id="34358">
    <property type="interactions" value="212"/>
</dbReference>
<dbReference type="ComplexPortal" id="CPX-1901">
    <property type="entry name" value="Peroxisomal receptor export module complex"/>
</dbReference>
<dbReference type="DIP" id="DIP-4159N"/>
<dbReference type="FunCoup" id="Q08215">
    <property type="interactions" value="53"/>
</dbReference>
<dbReference type="IntAct" id="Q08215">
    <property type="interactions" value="13"/>
</dbReference>
<dbReference type="MINT" id="Q08215"/>
<dbReference type="STRING" id="4932.YOL044W"/>
<dbReference type="TCDB" id="3.A.20.1.5">
    <property type="family name" value="the peroxisomal protein importer (ppi) family"/>
</dbReference>
<dbReference type="iPTMnet" id="Q08215"/>
<dbReference type="PaxDb" id="4932-YOL044W"/>
<dbReference type="PeptideAtlas" id="Q08215"/>
<dbReference type="EnsemblFungi" id="YOL044W_mRNA">
    <property type="protein sequence ID" value="YOL044W"/>
    <property type="gene ID" value="YOL044W"/>
</dbReference>
<dbReference type="GeneID" id="854113"/>
<dbReference type="KEGG" id="sce:YOL044W"/>
<dbReference type="AGR" id="SGD:S000005404"/>
<dbReference type="SGD" id="S000005404">
    <property type="gene designation" value="PEX15"/>
</dbReference>
<dbReference type="VEuPathDB" id="FungiDB:YOL044W"/>
<dbReference type="eggNOG" id="ENOG502S7IW">
    <property type="taxonomic scope" value="Eukaryota"/>
</dbReference>
<dbReference type="HOGENOM" id="CLU_057737_0_0_1"/>
<dbReference type="InParanoid" id="Q08215"/>
<dbReference type="OMA" id="VSACDIM"/>
<dbReference type="OrthoDB" id="4067660at2759"/>
<dbReference type="BioCyc" id="YEAST:G3O-33458-MONOMER"/>
<dbReference type="BioGRID-ORCS" id="854113">
    <property type="hits" value="0 hits in 10 CRISPR screens"/>
</dbReference>
<dbReference type="PRO" id="PR:Q08215"/>
<dbReference type="Proteomes" id="UP000002311">
    <property type="component" value="Chromosome XV"/>
</dbReference>
<dbReference type="RNAct" id="Q08215">
    <property type="molecule type" value="protein"/>
</dbReference>
<dbReference type="GO" id="GO:1904949">
    <property type="term" value="C:ATPase complex"/>
    <property type="evidence" value="ECO:0000314"/>
    <property type="project" value="UniProt"/>
</dbReference>
<dbReference type="GO" id="GO:0005789">
    <property type="term" value="C:endoplasmic reticulum membrane"/>
    <property type="evidence" value="ECO:0007669"/>
    <property type="project" value="UniProtKB-SubCell"/>
</dbReference>
<dbReference type="GO" id="GO:0005778">
    <property type="term" value="C:peroxisomal membrane"/>
    <property type="evidence" value="ECO:0000314"/>
    <property type="project" value="SGD"/>
</dbReference>
<dbReference type="GO" id="GO:1990351">
    <property type="term" value="C:transporter complex"/>
    <property type="evidence" value="ECO:0000314"/>
    <property type="project" value="UniProt"/>
</dbReference>
<dbReference type="GO" id="GO:0043495">
    <property type="term" value="F:protein-membrane adaptor activity"/>
    <property type="evidence" value="ECO:0000315"/>
    <property type="project" value="SGD"/>
</dbReference>
<dbReference type="GO" id="GO:0016562">
    <property type="term" value="P:protein import into peroxisome matrix, receptor recycling"/>
    <property type="evidence" value="ECO:0000315"/>
    <property type="project" value="SGD"/>
</dbReference>
<reference key="1">
    <citation type="journal article" date="1997" name="EMBO J.">
        <title>Overexpression of Pex15p, a phosphorylated peroxisomal integral membrane protein required for peroxisome assembly in S.cerevisiae, causes proliferation of the endoplasmic reticulum membrane.</title>
        <authorList>
            <person name="Elgersma Y."/>
            <person name="Kwast L."/>
            <person name="van den Berg M."/>
            <person name="Snyder W.B."/>
            <person name="Distel B."/>
            <person name="Subramani S."/>
            <person name="Tabak H.F."/>
        </authorList>
    </citation>
    <scope>NUCLEOTIDE SEQUENCE [GENOMIC DNA]</scope>
    <scope>FUNCTION</scope>
    <scope>PHOSPHORYLATION</scope>
    <scope>TOPOLOGY</scope>
</reference>
<reference key="2">
    <citation type="journal article" date="1997" name="Nature">
        <title>The nucleotide sequence of Saccharomyces cerevisiae chromosome XV.</title>
        <authorList>
            <person name="Dujon B."/>
            <person name="Albermann K."/>
            <person name="Aldea M."/>
            <person name="Alexandraki D."/>
            <person name="Ansorge W."/>
            <person name="Arino J."/>
            <person name="Benes V."/>
            <person name="Bohn C."/>
            <person name="Bolotin-Fukuhara M."/>
            <person name="Bordonne R."/>
            <person name="Boyer J."/>
            <person name="Camasses A."/>
            <person name="Casamayor A."/>
            <person name="Casas C."/>
            <person name="Cheret G."/>
            <person name="Cziepluch C."/>
            <person name="Daignan-Fornier B."/>
            <person name="Dang V.-D."/>
            <person name="de Haan M."/>
            <person name="Delius H."/>
            <person name="Durand P."/>
            <person name="Fairhead C."/>
            <person name="Feldmann H."/>
            <person name="Gaillon L."/>
            <person name="Galisson F."/>
            <person name="Gamo F.-J."/>
            <person name="Gancedo C."/>
            <person name="Goffeau A."/>
            <person name="Goulding S.E."/>
            <person name="Grivell L.A."/>
            <person name="Habbig B."/>
            <person name="Hand N.J."/>
            <person name="Hani J."/>
            <person name="Hattenhorst U."/>
            <person name="Hebling U."/>
            <person name="Hernando Y."/>
            <person name="Herrero E."/>
            <person name="Heumann K."/>
            <person name="Hiesel R."/>
            <person name="Hilger F."/>
            <person name="Hofmann B."/>
            <person name="Hollenberg C.P."/>
            <person name="Hughes B."/>
            <person name="Jauniaux J.-C."/>
            <person name="Kalogeropoulos A."/>
            <person name="Katsoulou C."/>
            <person name="Kordes E."/>
            <person name="Lafuente M.J."/>
            <person name="Landt O."/>
            <person name="Louis E.J."/>
            <person name="Maarse A.C."/>
            <person name="Madania A."/>
            <person name="Mannhaupt G."/>
            <person name="Marck C."/>
            <person name="Martin R.P."/>
            <person name="Mewes H.-W."/>
            <person name="Michaux G."/>
            <person name="Paces V."/>
            <person name="Parle-McDermott A.G."/>
            <person name="Pearson B.M."/>
            <person name="Perrin A."/>
            <person name="Pettersson B."/>
            <person name="Poch O."/>
            <person name="Pohl T.M."/>
            <person name="Poirey R."/>
            <person name="Portetelle D."/>
            <person name="Pujol A."/>
            <person name="Purnelle B."/>
            <person name="Ramezani Rad M."/>
            <person name="Rechmann S."/>
            <person name="Schwager C."/>
            <person name="Schweizer M."/>
            <person name="Sor F."/>
            <person name="Sterky F."/>
            <person name="Tarassov I.A."/>
            <person name="Teodoru C."/>
            <person name="Tettelin H."/>
            <person name="Thierry A."/>
            <person name="Tobiasch E."/>
            <person name="Tzermia M."/>
            <person name="Uhlen M."/>
            <person name="Unseld M."/>
            <person name="Valens M."/>
            <person name="Vandenbol M."/>
            <person name="Vetter I."/>
            <person name="Vlcek C."/>
            <person name="Voet M."/>
            <person name="Volckaert G."/>
            <person name="Voss H."/>
            <person name="Wambutt R."/>
            <person name="Wedler H."/>
            <person name="Wiemann S."/>
            <person name="Winsor B."/>
            <person name="Wolfe K.H."/>
            <person name="Zollner A."/>
            <person name="Zumstein E."/>
            <person name="Kleine K."/>
        </authorList>
    </citation>
    <scope>NUCLEOTIDE SEQUENCE [LARGE SCALE GENOMIC DNA]</scope>
    <source>
        <strain>ATCC 204508 / S288c</strain>
    </source>
</reference>
<reference key="3">
    <citation type="journal article" date="2014" name="G3 (Bethesda)">
        <title>The reference genome sequence of Saccharomyces cerevisiae: Then and now.</title>
        <authorList>
            <person name="Engel S.R."/>
            <person name="Dietrich F.S."/>
            <person name="Fisk D.G."/>
            <person name="Binkley G."/>
            <person name="Balakrishnan R."/>
            <person name="Costanzo M.C."/>
            <person name="Dwight S.S."/>
            <person name="Hitz B.C."/>
            <person name="Karra K."/>
            <person name="Nash R.S."/>
            <person name="Weng S."/>
            <person name="Wong E.D."/>
            <person name="Lloyd P."/>
            <person name="Skrzypek M.S."/>
            <person name="Miyasato S.R."/>
            <person name="Simison M."/>
            <person name="Cherry J.M."/>
        </authorList>
    </citation>
    <scope>GENOME REANNOTATION</scope>
    <source>
        <strain>ATCC 204508 / S288c</strain>
    </source>
</reference>
<reference key="4">
    <citation type="journal article" date="2003" name="Mol. Biol. Cell">
        <title>Pex15p of Saccharomyces cerevisiae provides a molecular basis for recruitment of the AAA peroxin Pex6p to peroxisomal membranes.</title>
        <authorList>
            <person name="Birschmann I."/>
            <person name="Stroobants A.K."/>
            <person name="van den Berg M."/>
            <person name="Schaefer A."/>
            <person name="Rosenkranz K."/>
            <person name="Kunau W.-H."/>
            <person name="Tabak H.F."/>
        </authorList>
    </citation>
    <scope>FUNCTION</scope>
    <scope>INTERACTION WITH PEX6</scope>
    <scope>MUTAGENESIS OF LEU-22; GLN-47 AND VAL-50</scope>
</reference>
<reference key="5">
    <citation type="journal article" date="2003" name="Nature">
        <title>Global analysis of protein localization in budding yeast.</title>
        <authorList>
            <person name="Huh W.-K."/>
            <person name="Falvo J.V."/>
            <person name="Gerke L.C."/>
            <person name="Carroll A.S."/>
            <person name="Howson R.W."/>
            <person name="Weissman J.S."/>
            <person name="O'Shea E.K."/>
        </authorList>
    </citation>
    <scope>SUBCELLULAR LOCATION [LARGE SCALE ANALYSIS]</scope>
</reference>
<reference key="6">
    <citation type="journal article" date="2003" name="Nature">
        <title>Global analysis of protein expression in yeast.</title>
        <authorList>
            <person name="Ghaemmaghami S."/>
            <person name="Huh W.-K."/>
            <person name="Bower K."/>
            <person name="Howson R.W."/>
            <person name="Belle A."/>
            <person name="Dephoure N."/>
            <person name="O'Shea E.K."/>
            <person name="Weissman J.S."/>
        </authorList>
    </citation>
    <scope>LEVEL OF PROTEIN EXPRESSION [LARGE SCALE ANALYSIS]</scope>
</reference>
<reference key="7">
    <citation type="journal article" date="2005" name="Nat. Cell Biol.">
        <title>Functional role of the AAA peroxins in dislocation of the cycling PTS1 receptor back to the cytosol.</title>
        <authorList>
            <person name="Platta H.W."/>
            <person name="Grunau S."/>
            <person name="Rosenkranz K."/>
            <person name="Girzalsky W."/>
            <person name="Erdmann R."/>
        </authorList>
    </citation>
    <scope>FUNCTION</scope>
</reference>
<reference key="8">
    <citation type="journal article" date="2006" name="J. Cell Sci.">
        <title>Targeting of the tail-anchored peroxisomal membrane proteins PEX26 and PEX15 occurs through C-terminal PEX19-binding sites.</title>
        <authorList>
            <person name="Halbach A."/>
            <person name="Landgraf C."/>
            <person name="Lorenzen S."/>
            <person name="Rosenkranz K."/>
            <person name="Volkmer-Engert R."/>
            <person name="Erdmann R."/>
            <person name="Rottensteiner H."/>
        </authorList>
    </citation>
    <scope>INTERACTION WITH PEX19</scope>
    <scope>PEROXISOMAL SUBCELLULAR LOCATION</scope>
</reference>
<reference key="9">
    <citation type="journal article" date="2014" name="Proc. Natl. Acad. Sci. U.S.A.">
        <title>The conserved AAA-ATPase Msp1 confers organelle specificity to tail-anchored proteins.</title>
        <authorList>
            <person name="Okreglak V."/>
            <person name="Walter P."/>
        </authorList>
    </citation>
    <scope>SUBCELLULAR LOCATION</scope>
</reference>
<sequence length="383" mass="43676">MAASEIMNNLPMHSLDSSLRDLLNDDLFIESDESTKSVNDQRSEVFQECVNLFIKRDIKDCLEKMSEVGFIDITVFKSNPMILDLFVSACDIMPSFTKLGLTLQSEILNIFTLDTPQCIETRKIILGDLSKLLVINKFFRCCIKVIQFNLTDHTEQEEKTLELESIMSDFIFVYITKMRTTIDVVGLQELIEIFIFQVKVKLHHKKPSPNMYWALCKTLPKLSPTLKGLYLSKDVSIEDAILNSIDNKIQKDKAKSKGKQRGVKQKIHHFHEPMLHNSSEEQVKVEDAFNQRTSTDSRLQSTGTAPRKKNNDITVLAGSFWAVLKHHFTRSVLNKNGLLLTGLLLLLCLKKYKSLMAIFKHVPAAFHTVYPQIVGLLKLLASI</sequence>